<accession>Q57EU9</accession>
<gene>
    <name evidence="1" type="primary">pdxH</name>
    <name type="ordered locus">BruAb1_0439</name>
</gene>
<keyword id="KW-0285">Flavoprotein</keyword>
<keyword id="KW-0288">FMN</keyword>
<keyword id="KW-0560">Oxidoreductase</keyword>
<keyword id="KW-0664">Pyridoxine biosynthesis</keyword>
<name>PDXH_BRUAB</name>
<organism>
    <name type="scientific">Brucella abortus biovar 1 (strain 9-941)</name>
    <dbReference type="NCBI Taxonomy" id="262698"/>
    <lineage>
        <taxon>Bacteria</taxon>
        <taxon>Pseudomonadati</taxon>
        <taxon>Pseudomonadota</taxon>
        <taxon>Alphaproteobacteria</taxon>
        <taxon>Hyphomicrobiales</taxon>
        <taxon>Brucellaceae</taxon>
        <taxon>Brucella/Ochrobactrum group</taxon>
        <taxon>Brucella</taxon>
    </lineage>
</organism>
<reference key="1">
    <citation type="journal article" date="2005" name="J. Bacteriol.">
        <title>Completion of the genome sequence of Brucella abortus and comparison to the highly similar genomes of Brucella melitensis and Brucella suis.</title>
        <authorList>
            <person name="Halling S.M."/>
            <person name="Peterson-Burch B.D."/>
            <person name="Bricker B.J."/>
            <person name="Zuerner R.L."/>
            <person name="Qing Z."/>
            <person name="Li L.-L."/>
            <person name="Kapur V."/>
            <person name="Alt D.P."/>
            <person name="Olsen S.C."/>
        </authorList>
    </citation>
    <scope>NUCLEOTIDE SEQUENCE [LARGE SCALE GENOMIC DNA]</scope>
    <source>
        <strain>9-941</strain>
    </source>
</reference>
<evidence type="ECO:0000255" key="1">
    <source>
        <dbReference type="HAMAP-Rule" id="MF_01629"/>
    </source>
</evidence>
<feature type="chain" id="PRO_0000255855" description="Pyridoxine/pyridoxamine 5'-phosphate oxidase">
    <location>
        <begin position="1"/>
        <end position="208"/>
    </location>
</feature>
<feature type="binding site" evidence="1">
    <location>
        <begin position="55"/>
        <end position="60"/>
    </location>
    <ligand>
        <name>FMN</name>
        <dbReference type="ChEBI" id="CHEBI:58210"/>
    </ligand>
</feature>
<feature type="binding site" evidence="1">
    <location>
        <position position="60"/>
    </location>
    <ligand>
        <name>substrate</name>
    </ligand>
</feature>
<feature type="binding site" evidence="1">
    <location>
        <begin position="70"/>
        <end position="71"/>
    </location>
    <ligand>
        <name>FMN</name>
        <dbReference type="ChEBI" id="CHEBI:58210"/>
    </ligand>
</feature>
<feature type="binding site" evidence="1">
    <location>
        <position position="76"/>
    </location>
    <ligand>
        <name>FMN</name>
        <dbReference type="ChEBI" id="CHEBI:58210"/>
    </ligand>
</feature>
<feature type="binding site" evidence="1">
    <location>
        <position position="77"/>
    </location>
    <ligand>
        <name>FMN</name>
        <dbReference type="ChEBI" id="CHEBI:58210"/>
    </ligand>
</feature>
<feature type="binding site" evidence="1">
    <location>
        <position position="99"/>
    </location>
    <ligand>
        <name>FMN</name>
        <dbReference type="ChEBI" id="CHEBI:58210"/>
    </ligand>
</feature>
<feature type="binding site" evidence="1">
    <location>
        <position position="117"/>
    </location>
    <ligand>
        <name>substrate</name>
    </ligand>
</feature>
<feature type="binding site" evidence="1">
    <location>
        <position position="121"/>
    </location>
    <ligand>
        <name>substrate</name>
    </ligand>
</feature>
<feature type="binding site" evidence="1">
    <location>
        <position position="125"/>
    </location>
    <ligand>
        <name>substrate</name>
    </ligand>
</feature>
<feature type="binding site" evidence="1">
    <location>
        <begin position="134"/>
        <end position="135"/>
    </location>
    <ligand>
        <name>FMN</name>
        <dbReference type="ChEBI" id="CHEBI:58210"/>
    </ligand>
</feature>
<feature type="binding site" evidence="1">
    <location>
        <position position="179"/>
    </location>
    <ligand>
        <name>FMN</name>
        <dbReference type="ChEBI" id="CHEBI:58210"/>
    </ligand>
</feature>
<feature type="binding site" evidence="1">
    <location>
        <begin position="185"/>
        <end position="187"/>
    </location>
    <ligand>
        <name>substrate</name>
    </ligand>
</feature>
<feature type="binding site" evidence="1">
    <location>
        <position position="189"/>
    </location>
    <ligand>
        <name>FMN</name>
        <dbReference type="ChEBI" id="CHEBI:58210"/>
    </ligand>
</feature>
<dbReference type="EC" id="1.4.3.5" evidence="1"/>
<dbReference type="EMBL" id="AE017223">
    <property type="protein sequence ID" value="AAX73835.1"/>
    <property type="molecule type" value="Genomic_DNA"/>
</dbReference>
<dbReference type="SMR" id="Q57EU9"/>
<dbReference type="EnsemblBacteria" id="AAX73835">
    <property type="protein sequence ID" value="AAX73835"/>
    <property type="gene ID" value="BruAb1_0439"/>
</dbReference>
<dbReference type="KEGG" id="bmb:BruAb1_0439"/>
<dbReference type="HOGENOM" id="CLU_032263_2_3_5"/>
<dbReference type="UniPathway" id="UPA01068">
    <property type="reaction ID" value="UER00304"/>
</dbReference>
<dbReference type="UniPathway" id="UPA01068">
    <property type="reaction ID" value="UER00305"/>
</dbReference>
<dbReference type="Proteomes" id="UP000000540">
    <property type="component" value="Chromosome I"/>
</dbReference>
<dbReference type="GO" id="GO:0010181">
    <property type="term" value="F:FMN binding"/>
    <property type="evidence" value="ECO:0007669"/>
    <property type="project" value="UniProtKB-UniRule"/>
</dbReference>
<dbReference type="GO" id="GO:0004733">
    <property type="term" value="F:pyridoxamine phosphate oxidase activity"/>
    <property type="evidence" value="ECO:0007669"/>
    <property type="project" value="UniProtKB-UniRule"/>
</dbReference>
<dbReference type="GO" id="GO:0008615">
    <property type="term" value="P:pyridoxine biosynthetic process"/>
    <property type="evidence" value="ECO:0007669"/>
    <property type="project" value="UniProtKB-KW"/>
</dbReference>
<dbReference type="Gene3D" id="2.30.110.10">
    <property type="entry name" value="Electron Transport, Fmn-binding Protein, Chain A"/>
    <property type="match status" value="1"/>
</dbReference>
<dbReference type="HAMAP" id="MF_01629">
    <property type="entry name" value="PdxH"/>
    <property type="match status" value="1"/>
</dbReference>
<dbReference type="InterPro" id="IPR000659">
    <property type="entry name" value="Pyridox_Oxase"/>
</dbReference>
<dbReference type="InterPro" id="IPR019740">
    <property type="entry name" value="Pyridox_Oxase_CS"/>
</dbReference>
<dbReference type="InterPro" id="IPR011576">
    <property type="entry name" value="Pyridox_Oxase_N"/>
</dbReference>
<dbReference type="InterPro" id="IPR019576">
    <property type="entry name" value="Pyridoxamine_oxidase_dimer_C"/>
</dbReference>
<dbReference type="InterPro" id="IPR012349">
    <property type="entry name" value="Split_barrel_FMN-bd"/>
</dbReference>
<dbReference type="NCBIfam" id="TIGR00558">
    <property type="entry name" value="pdxH"/>
    <property type="match status" value="1"/>
</dbReference>
<dbReference type="NCBIfam" id="NF004231">
    <property type="entry name" value="PRK05679.1"/>
    <property type="match status" value="1"/>
</dbReference>
<dbReference type="PANTHER" id="PTHR10851:SF0">
    <property type="entry name" value="PYRIDOXINE-5'-PHOSPHATE OXIDASE"/>
    <property type="match status" value="1"/>
</dbReference>
<dbReference type="PANTHER" id="PTHR10851">
    <property type="entry name" value="PYRIDOXINE-5-PHOSPHATE OXIDASE"/>
    <property type="match status" value="1"/>
</dbReference>
<dbReference type="Pfam" id="PF10590">
    <property type="entry name" value="PNP_phzG_C"/>
    <property type="match status" value="1"/>
</dbReference>
<dbReference type="Pfam" id="PF01243">
    <property type="entry name" value="PNPOx_N"/>
    <property type="match status" value="1"/>
</dbReference>
<dbReference type="PIRSF" id="PIRSF000190">
    <property type="entry name" value="Pyd_amn-ph_oxd"/>
    <property type="match status" value="1"/>
</dbReference>
<dbReference type="SUPFAM" id="SSF50475">
    <property type="entry name" value="FMN-binding split barrel"/>
    <property type="match status" value="1"/>
</dbReference>
<dbReference type="PROSITE" id="PS01064">
    <property type="entry name" value="PYRIDOX_OXIDASE"/>
    <property type="match status" value="1"/>
</dbReference>
<proteinExistence type="inferred from homology"/>
<sequence length="208" mass="23866">MEPVKMTNSSDDFTQSAEPFKLFAEWLADAAKSEPNDPNAVALATVDPDGLPNVRMVLLKDFDETGFVFYTNYESKKGQEILSAEKAAMCFHWKSLRRQVRVRGPVEKVSDAEADAYYASRPRGSRIGAWASKQSRPLESRFALEKAVAEYTAKYAIGDIPRPPYWSGFRIRPVSIEFWHDRPFRLHDRVLFTRPTPEGDWNKDRLYP</sequence>
<comment type="function">
    <text evidence="1">Catalyzes the oxidation of either pyridoxine 5'-phosphate (PNP) or pyridoxamine 5'-phosphate (PMP) into pyridoxal 5'-phosphate (PLP).</text>
</comment>
<comment type="catalytic activity">
    <reaction evidence="1">
        <text>pyridoxamine 5'-phosphate + O2 + H2O = pyridoxal 5'-phosphate + H2O2 + NH4(+)</text>
        <dbReference type="Rhea" id="RHEA:15817"/>
        <dbReference type="ChEBI" id="CHEBI:15377"/>
        <dbReference type="ChEBI" id="CHEBI:15379"/>
        <dbReference type="ChEBI" id="CHEBI:16240"/>
        <dbReference type="ChEBI" id="CHEBI:28938"/>
        <dbReference type="ChEBI" id="CHEBI:58451"/>
        <dbReference type="ChEBI" id="CHEBI:597326"/>
        <dbReference type="EC" id="1.4.3.5"/>
    </reaction>
</comment>
<comment type="catalytic activity">
    <reaction evidence="1">
        <text>pyridoxine 5'-phosphate + O2 = pyridoxal 5'-phosphate + H2O2</text>
        <dbReference type="Rhea" id="RHEA:15149"/>
        <dbReference type="ChEBI" id="CHEBI:15379"/>
        <dbReference type="ChEBI" id="CHEBI:16240"/>
        <dbReference type="ChEBI" id="CHEBI:58589"/>
        <dbReference type="ChEBI" id="CHEBI:597326"/>
        <dbReference type="EC" id="1.4.3.5"/>
    </reaction>
</comment>
<comment type="cofactor">
    <cofactor evidence="1">
        <name>FMN</name>
        <dbReference type="ChEBI" id="CHEBI:58210"/>
    </cofactor>
    <text evidence="1">Binds 1 FMN per subunit.</text>
</comment>
<comment type="pathway">
    <text evidence="1">Cofactor metabolism; pyridoxal 5'-phosphate salvage; pyridoxal 5'-phosphate from pyridoxamine 5'-phosphate: step 1/1.</text>
</comment>
<comment type="pathway">
    <text evidence="1">Cofactor metabolism; pyridoxal 5'-phosphate salvage; pyridoxal 5'-phosphate from pyridoxine 5'-phosphate: step 1/1.</text>
</comment>
<comment type="subunit">
    <text evidence="1">Homodimer.</text>
</comment>
<comment type="similarity">
    <text evidence="1">Belongs to the pyridoxamine 5'-phosphate oxidase family.</text>
</comment>
<protein>
    <recommendedName>
        <fullName evidence="1">Pyridoxine/pyridoxamine 5'-phosphate oxidase</fullName>
        <ecNumber evidence="1">1.4.3.5</ecNumber>
    </recommendedName>
    <alternativeName>
        <fullName evidence="1">PNP/PMP oxidase</fullName>
        <shortName evidence="1">PNPOx</shortName>
    </alternativeName>
    <alternativeName>
        <fullName evidence="1">Pyridoxal 5'-phosphate synthase</fullName>
    </alternativeName>
</protein>